<feature type="chain" id="PRO_1000092609" description="Ribosomal RNA small subunit methyltransferase G">
    <location>
        <begin position="1"/>
        <end position="205"/>
    </location>
</feature>
<feature type="binding site" evidence="1">
    <location>
        <position position="73"/>
    </location>
    <ligand>
        <name>S-adenosyl-L-methionine</name>
        <dbReference type="ChEBI" id="CHEBI:59789"/>
    </ligand>
</feature>
<feature type="binding site" evidence="1">
    <location>
        <position position="78"/>
    </location>
    <ligand>
        <name>S-adenosyl-L-methionine</name>
        <dbReference type="ChEBI" id="CHEBI:59789"/>
    </ligand>
</feature>
<feature type="binding site" evidence="1">
    <location>
        <begin position="124"/>
        <end position="125"/>
    </location>
    <ligand>
        <name>S-adenosyl-L-methionine</name>
        <dbReference type="ChEBI" id="CHEBI:59789"/>
    </ligand>
</feature>
<feature type="binding site" evidence="1">
    <location>
        <position position="138"/>
    </location>
    <ligand>
        <name>S-adenosyl-L-methionine</name>
        <dbReference type="ChEBI" id="CHEBI:59789"/>
    </ligand>
</feature>
<protein>
    <recommendedName>
        <fullName evidence="1">Ribosomal RNA small subunit methyltransferase G</fullName>
        <ecNumber evidence="1">2.1.1.170</ecNumber>
    </recommendedName>
    <alternativeName>
        <fullName evidence="1">16S rRNA 7-methylguanosine methyltransferase</fullName>
        <shortName evidence="1">16S rRNA m7G methyltransferase</shortName>
    </alternativeName>
</protein>
<gene>
    <name evidence="1" type="primary">rsmG</name>
    <name type="ordered locus">APP7_1716</name>
</gene>
<comment type="function">
    <text evidence="1">Specifically methylates the N7 position of guanine in position 527 of 16S rRNA.</text>
</comment>
<comment type="catalytic activity">
    <reaction evidence="1">
        <text>guanosine(527) in 16S rRNA + S-adenosyl-L-methionine = N(7)-methylguanosine(527) in 16S rRNA + S-adenosyl-L-homocysteine</text>
        <dbReference type="Rhea" id="RHEA:42732"/>
        <dbReference type="Rhea" id="RHEA-COMP:10209"/>
        <dbReference type="Rhea" id="RHEA-COMP:10210"/>
        <dbReference type="ChEBI" id="CHEBI:57856"/>
        <dbReference type="ChEBI" id="CHEBI:59789"/>
        <dbReference type="ChEBI" id="CHEBI:74269"/>
        <dbReference type="ChEBI" id="CHEBI:74480"/>
        <dbReference type="EC" id="2.1.1.170"/>
    </reaction>
</comment>
<comment type="subcellular location">
    <subcellularLocation>
        <location evidence="1">Cytoplasm</location>
    </subcellularLocation>
</comment>
<comment type="similarity">
    <text evidence="1">Belongs to the methyltransferase superfamily. RNA methyltransferase RsmG family.</text>
</comment>
<dbReference type="EC" id="2.1.1.170" evidence="1"/>
<dbReference type="EMBL" id="CP001091">
    <property type="protein sequence ID" value="ACE62368.1"/>
    <property type="molecule type" value="Genomic_DNA"/>
</dbReference>
<dbReference type="RefSeq" id="WP_005605652.1">
    <property type="nucleotide sequence ID" value="NC_010939.1"/>
</dbReference>
<dbReference type="SMR" id="B3H2Q1"/>
<dbReference type="KEGG" id="apa:APP7_1716"/>
<dbReference type="HOGENOM" id="CLU_065341_2_2_6"/>
<dbReference type="Proteomes" id="UP000001226">
    <property type="component" value="Chromosome"/>
</dbReference>
<dbReference type="GO" id="GO:0005829">
    <property type="term" value="C:cytosol"/>
    <property type="evidence" value="ECO:0007669"/>
    <property type="project" value="TreeGrafter"/>
</dbReference>
<dbReference type="GO" id="GO:0070043">
    <property type="term" value="F:rRNA (guanine-N7-)-methyltransferase activity"/>
    <property type="evidence" value="ECO:0007669"/>
    <property type="project" value="UniProtKB-UniRule"/>
</dbReference>
<dbReference type="CDD" id="cd02440">
    <property type="entry name" value="AdoMet_MTases"/>
    <property type="match status" value="1"/>
</dbReference>
<dbReference type="Gene3D" id="3.40.50.150">
    <property type="entry name" value="Vaccinia Virus protein VP39"/>
    <property type="match status" value="1"/>
</dbReference>
<dbReference type="HAMAP" id="MF_00074">
    <property type="entry name" value="16SrRNA_methyltr_G"/>
    <property type="match status" value="1"/>
</dbReference>
<dbReference type="InterPro" id="IPR003682">
    <property type="entry name" value="rRNA_ssu_MeTfrase_G"/>
</dbReference>
<dbReference type="InterPro" id="IPR029063">
    <property type="entry name" value="SAM-dependent_MTases_sf"/>
</dbReference>
<dbReference type="NCBIfam" id="TIGR00138">
    <property type="entry name" value="rsmG_gidB"/>
    <property type="match status" value="1"/>
</dbReference>
<dbReference type="PANTHER" id="PTHR31760">
    <property type="entry name" value="S-ADENOSYL-L-METHIONINE-DEPENDENT METHYLTRANSFERASES SUPERFAMILY PROTEIN"/>
    <property type="match status" value="1"/>
</dbReference>
<dbReference type="PANTHER" id="PTHR31760:SF0">
    <property type="entry name" value="S-ADENOSYL-L-METHIONINE-DEPENDENT METHYLTRANSFERASES SUPERFAMILY PROTEIN"/>
    <property type="match status" value="1"/>
</dbReference>
<dbReference type="Pfam" id="PF02527">
    <property type="entry name" value="GidB"/>
    <property type="match status" value="1"/>
</dbReference>
<dbReference type="PIRSF" id="PIRSF003078">
    <property type="entry name" value="GidB"/>
    <property type="match status" value="1"/>
</dbReference>
<dbReference type="SUPFAM" id="SSF53335">
    <property type="entry name" value="S-adenosyl-L-methionine-dependent methyltransferases"/>
    <property type="match status" value="1"/>
</dbReference>
<organism>
    <name type="scientific">Actinobacillus pleuropneumoniae serotype 7 (strain AP76)</name>
    <dbReference type="NCBI Taxonomy" id="537457"/>
    <lineage>
        <taxon>Bacteria</taxon>
        <taxon>Pseudomonadati</taxon>
        <taxon>Pseudomonadota</taxon>
        <taxon>Gammaproteobacteria</taxon>
        <taxon>Pasteurellales</taxon>
        <taxon>Pasteurellaceae</taxon>
        <taxon>Actinobacillus</taxon>
    </lineage>
</organism>
<proteinExistence type="inferred from homology"/>
<name>RSMG_ACTP7</name>
<sequence length="205" mass="23267">MRQKLDRLLEQAQINLTDQQKEQLVGFVRLLDKWNKAYNLTSVRNPDEMLVKHILDSLVVSEHLQGNNFIDVGTGPGLPGIPLAIANPDKQFVLLDSLGKRITFIKNALRELGITNVTPVLSRVEEYKEQTFDGVLSRAFASLNDMVDWCYHLPNPQGKFYALKGIYAESEVQEIKNPIWLEKVIPLSVPELVGERHLVLLNKPN</sequence>
<keyword id="KW-0963">Cytoplasm</keyword>
<keyword id="KW-0489">Methyltransferase</keyword>
<keyword id="KW-0698">rRNA processing</keyword>
<keyword id="KW-0949">S-adenosyl-L-methionine</keyword>
<keyword id="KW-0808">Transferase</keyword>
<evidence type="ECO:0000255" key="1">
    <source>
        <dbReference type="HAMAP-Rule" id="MF_00074"/>
    </source>
</evidence>
<reference key="1">
    <citation type="submission" date="2008-06" db="EMBL/GenBank/DDBJ databases">
        <title>Genome and proteome analysis of A. pleuropneumoniae serotype 7.</title>
        <authorList>
            <person name="Linke B."/>
            <person name="Buettner F."/>
            <person name="Martinez-Arias R."/>
            <person name="Goesmann A."/>
            <person name="Baltes N."/>
            <person name="Tegetmeyer H."/>
            <person name="Singh M."/>
            <person name="Gerlach G.F."/>
        </authorList>
    </citation>
    <scope>NUCLEOTIDE SEQUENCE [LARGE SCALE GENOMIC DNA]</scope>
    <source>
        <strain>AP76</strain>
    </source>
</reference>
<accession>B3H2Q1</accession>